<proteinExistence type="inferred from homology"/>
<dbReference type="EMBL" id="CP000970">
    <property type="protein sequence ID" value="ACB16133.1"/>
    <property type="molecule type" value="Genomic_DNA"/>
</dbReference>
<dbReference type="RefSeq" id="WP_000107721.1">
    <property type="nucleotide sequence ID" value="NC_010498.1"/>
</dbReference>
<dbReference type="SMR" id="B1LFL8"/>
<dbReference type="KEGG" id="ecm:EcSMS35_3412"/>
<dbReference type="HOGENOM" id="CLU_052043_1_1_6"/>
<dbReference type="Proteomes" id="UP000007011">
    <property type="component" value="Chromosome"/>
</dbReference>
<dbReference type="GO" id="GO:0005886">
    <property type="term" value="C:plasma membrane"/>
    <property type="evidence" value="ECO:0007669"/>
    <property type="project" value="UniProtKB-SubCell"/>
</dbReference>
<dbReference type="GO" id="GO:0015194">
    <property type="term" value="F:L-serine transmembrane transporter activity"/>
    <property type="evidence" value="ECO:0007669"/>
    <property type="project" value="InterPro"/>
</dbReference>
<dbReference type="GO" id="GO:0015293">
    <property type="term" value="F:symporter activity"/>
    <property type="evidence" value="ECO:0007669"/>
    <property type="project" value="UniProtKB-UniRule"/>
</dbReference>
<dbReference type="GO" id="GO:0015565">
    <property type="term" value="F:threonine efflux transmembrane transporter activity"/>
    <property type="evidence" value="ECO:0007669"/>
    <property type="project" value="InterPro"/>
</dbReference>
<dbReference type="HAMAP" id="MF_01583">
    <property type="entry name" value="Thr_Ser_transp_TdcC"/>
    <property type="match status" value="1"/>
</dbReference>
<dbReference type="InterPro" id="IPR018227">
    <property type="entry name" value="Amino_acid_transport_2"/>
</dbReference>
<dbReference type="InterPro" id="IPR004694">
    <property type="entry name" value="Hydroxy_aa_transpt"/>
</dbReference>
<dbReference type="InterPro" id="IPR023726">
    <property type="entry name" value="Thr/Ser_transpt_TdcC"/>
</dbReference>
<dbReference type="NCBIfam" id="NF010152">
    <property type="entry name" value="PRK13629.1"/>
    <property type="match status" value="1"/>
</dbReference>
<dbReference type="NCBIfam" id="TIGR00814">
    <property type="entry name" value="stp"/>
    <property type="match status" value="1"/>
</dbReference>
<dbReference type="PANTHER" id="PTHR35334">
    <property type="entry name" value="SERINE TRANSPORTER"/>
    <property type="match status" value="1"/>
</dbReference>
<dbReference type="PANTHER" id="PTHR35334:SF1">
    <property type="entry name" value="THREONINE_SERINE TRANSPORTER TDCC"/>
    <property type="match status" value="1"/>
</dbReference>
<dbReference type="Pfam" id="PF03222">
    <property type="entry name" value="Trp_Tyr_perm"/>
    <property type="match status" value="1"/>
</dbReference>
<protein>
    <recommendedName>
        <fullName evidence="1">Threonine/serine transporter TdcC</fullName>
    </recommendedName>
    <alternativeName>
        <fullName evidence="1">H(+)/threonine-serine symporter</fullName>
    </alternativeName>
</protein>
<keyword id="KW-0029">Amino-acid transport</keyword>
<keyword id="KW-0997">Cell inner membrane</keyword>
<keyword id="KW-1003">Cell membrane</keyword>
<keyword id="KW-0472">Membrane</keyword>
<keyword id="KW-0769">Symport</keyword>
<keyword id="KW-0812">Transmembrane</keyword>
<keyword id="KW-1133">Transmembrane helix</keyword>
<keyword id="KW-0813">Transport</keyword>
<organism>
    <name type="scientific">Escherichia coli (strain SMS-3-5 / SECEC)</name>
    <dbReference type="NCBI Taxonomy" id="439855"/>
    <lineage>
        <taxon>Bacteria</taxon>
        <taxon>Pseudomonadati</taxon>
        <taxon>Pseudomonadota</taxon>
        <taxon>Gammaproteobacteria</taxon>
        <taxon>Enterobacterales</taxon>
        <taxon>Enterobacteriaceae</taxon>
        <taxon>Escherichia</taxon>
    </lineage>
</organism>
<name>TDCC_ECOSM</name>
<gene>
    <name evidence="1" type="primary">tdcC</name>
    <name type="ordered locus">EcSMS35_3412</name>
</gene>
<feature type="chain" id="PRO_1000147632" description="Threonine/serine transporter TdcC">
    <location>
        <begin position="1"/>
        <end position="443"/>
    </location>
</feature>
<feature type="transmembrane region" description="Helical" evidence="1">
    <location>
        <begin position="22"/>
        <end position="42"/>
    </location>
</feature>
<feature type="transmembrane region" description="Helical" evidence="1">
    <location>
        <begin position="44"/>
        <end position="64"/>
    </location>
</feature>
<feature type="transmembrane region" description="Helical" evidence="1">
    <location>
        <begin position="97"/>
        <end position="117"/>
    </location>
</feature>
<feature type="transmembrane region" description="Helical" evidence="1">
    <location>
        <begin position="140"/>
        <end position="160"/>
    </location>
</feature>
<feature type="transmembrane region" description="Helical" evidence="1">
    <location>
        <begin position="163"/>
        <end position="183"/>
    </location>
</feature>
<feature type="transmembrane region" description="Helical" evidence="1">
    <location>
        <begin position="207"/>
        <end position="227"/>
    </location>
</feature>
<feature type="transmembrane region" description="Helical" evidence="1">
    <location>
        <begin position="261"/>
        <end position="281"/>
    </location>
</feature>
<feature type="transmembrane region" description="Helical" evidence="1">
    <location>
        <begin position="311"/>
        <end position="331"/>
    </location>
</feature>
<feature type="transmembrane region" description="Helical" evidence="1">
    <location>
        <begin position="366"/>
        <end position="386"/>
    </location>
</feature>
<feature type="transmembrane region" description="Helical" evidence="1">
    <location>
        <begin position="389"/>
        <end position="409"/>
    </location>
</feature>
<feature type="transmembrane region" description="Helical" evidence="1">
    <location>
        <begin position="423"/>
        <end position="443"/>
    </location>
</feature>
<evidence type="ECO:0000255" key="1">
    <source>
        <dbReference type="HAMAP-Rule" id="MF_01583"/>
    </source>
</evidence>
<accession>B1LFL8</accession>
<sequence length="443" mass="48893">MSTSDSIVSSQTKQSSWRKSDTTWTLGLFGTAIGAGVLFFPIRAGFGGLIPILLMLVLAYPIAFYCHRALARLCLSGSNPSGNITETVEEHFGKTGGVVITFLYFFAICPLLWIYGVTITNTFMTFWENQLGFAPLNRGFVALFLLLLMAFVIWFGKDLMVKVMSYLVWPFIASLVLISLSLIPYWNSAVIDQVDLGSLSLTGHDGILITVWLGISIMVFSFNFSPIVSSFVVSKREEYEKDFGRDFTERKCSQIISRASMLMVAVVMFFAFSCLFTLSPANMAEAKAQNIPVLSYLANHFASMTGTKTTFAITLEYAASIIALVAIFKSFFGHYLGTLEGLNGLILKFGYKGDKTKVSLGKLNTLSMIFIMGSTWVVAYANPNILDLIEAMGAPIIASLLCLLPMYAIRKAPSLAKYRGRLDNVFVTVIGLLTILNIVYKLF</sequence>
<reference key="1">
    <citation type="journal article" date="2008" name="J. Bacteriol.">
        <title>Insights into the environmental resistance gene pool from the genome sequence of the multidrug-resistant environmental isolate Escherichia coli SMS-3-5.</title>
        <authorList>
            <person name="Fricke W.F."/>
            <person name="Wright M.S."/>
            <person name="Lindell A.H."/>
            <person name="Harkins D.M."/>
            <person name="Baker-Austin C."/>
            <person name="Ravel J."/>
            <person name="Stepanauskas R."/>
        </authorList>
    </citation>
    <scope>NUCLEOTIDE SEQUENCE [LARGE SCALE GENOMIC DNA]</scope>
    <source>
        <strain>SMS-3-5 / SECEC</strain>
    </source>
</reference>
<comment type="function">
    <text evidence="1">Involved in the import of threonine and serine into the cell, with the concomitant import of a proton (symport system).</text>
</comment>
<comment type="catalytic activity">
    <reaction evidence="1">
        <text>L-threonine(in) + H(+)(in) = L-threonine(out) + H(+)(out)</text>
        <dbReference type="Rhea" id="RHEA:28883"/>
        <dbReference type="ChEBI" id="CHEBI:15378"/>
        <dbReference type="ChEBI" id="CHEBI:57926"/>
    </reaction>
    <physiologicalReaction direction="right-to-left" evidence="1">
        <dbReference type="Rhea" id="RHEA:28885"/>
    </physiologicalReaction>
</comment>
<comment type="catalytic activity">
    <reaction evidence="1">
        <text>L-serine(in) + H(+)(in) = L-serine(out) + H(+)(out)</text>
        <dbReference type="Rhea" id="RHEA:28887"/>
        <dbReference type="ChEBI" id="CHEBI:15378"/>
        <dbReference type="ChEBI" id="CHEBI:33384"/>
    </reaction>
    <physiologicalReaction direction="right-to-left" evidence="1">
        <dbReference type="Rhea" id="RHEA:28889"/>
    </physiologicalReaction>
</comment>
<comment type="subcellular location">
    <subcellularLocation>
        <location evidence="1">Cell inner membrane</location>
        <topology evidence="1">Multi-pass membrane protein</topology>
    </subcellularLocation>
</comment>
<comment type="similarity">
    <text evidence="1">Belongs to the amino acid/polyamine transporter 2 family. SdaC/TdcC subfamily.</text>
</comment>